<proteinExistence type="evidence at protein level"/>
<feature type="chain" id="PRO_0000459517" description="ATP-dependent ubiquitin transferase-like protein Cap2">
    <location>
        <begin position="1"/>
        <end position="543"/>
    </location>
</feature>
<feature type="region of interest" description="E2-like domain" evidence="10">
    <location>
        <begin position="1"/>
        <end position="159"/>
    </location>
</feature>
<feature type="region of interest" description="Linker domain" evidence="10">
    <location>
        <begin position="160"/>
        <end position="305"/>
    </location>
</feature>
<feature type="region of interest" description="Adenylation plus E1-like domain" evidence="10">
    <location>
        <begin position="306"/>
        <end position="543"/>
    </location>
</feature>
<feature type="active site" description="For E2-like domain" evidence="10">
    <location>
        <position position="84"/>
    </location>
</feature>
<feature type="active site" description="For E1-like domain" evidence="10">
    <location>
        <position position="450"/>
    </location>
</feature>
<feature type="active site" description="For E1-like domain" evidence="10">
    <location>
        <position position="453"/>
    </location>
</feature>
<feature type="mutagenesis site" description="No longer conjugates CD-NTase to cellular proteins." evidence="4">
    <original>C</original>
    <variation>A</variation>
    <location>
        <position position="84"/>
    </location>
</feature>
<feature type="mutagenesis site" description="Loss of defense against phage PaMx41." evidence="3">
    <original>CYRC</original>
    <variation>AYRA</variation>
    <location>
        <begin position="450"/>
        <end position="453"/>
    </location>
</feature>
<feature type="mutagenesis site" description="No longer conjugates CD-NTase to cellular proteins." evidence="4">
    <original>CYRC</original>
    <variation>YRAA</variation>
    <location>
        <begin position="450"/>
        <end position="453"/>
    </location>
</feature>
<evidence type="ECO:0000250" key="1">
    <source>
        <dbReference type="UniProtKB" id="P0DTF2"/>
    </source>
</evidence>
<evidence type="ECO:0000250" key="2">
    <source>
        <dbReference type="UniProtKB" id="P0DX82"/>
    </source>
</evidence>
<evidence type="ECO:0000269" key="3">
    <source>
    </source>
</evidence>
<evidence type="ECO:0000269" key="4">
    <source>
    </source>
</evidence>
<evidence type="ECO:0000303" key="5">
    <source>
    </source>
</evidence>
<evidence type="ECO:0000303" key="6">
    <source>
    </source>
</evidence>
<evidence type="ECO:0000303" key="7">
    <source>
    </source>
</evidence>
<evidence type="ECO:0000305" key="8"/>
<evidence type="ECO:0000305" key="9">
    <source>
    </source>
</evidence>
<evidence type="ECO:0000305" key="10">
    <source>
    </source>
</evidence>
<evidence type="ECO:0000312" key="11">
    <source>
        <dbReference type="EMBL" id="ERW74311.1"/>
    </source>
</evidence>
<reference key="1">
    <citation type="submission" date="2013-10" db="EMBL/GenBank/DDBJ databases">
        <title>The Genome Sequence of Pseudomonas aeruginosa BWHPSA011.</title>
        <authorList>
            <person name="Hung D."/>
            <person name="Penaranda C."/>
            <person name="Poulsen B."/>
            <person name="Young S.K."/>
            <person name="Zeng Q."/>
            <person name="Gargeya S."/>
            <person name="Fitzgerald M."/>
            <person name="Abouelleil A."/>
            <person name="Alvarado L."/>
            <person name="Chapman S.B."/>
            <person name="Gainer-Dewar J."/>
            <person name="Goldberg J."/>
            <person name="Griggs A."/>
            <person name="Gujja S."/>
            <person name="Hansen M."/>
            <person name="Howarth C."/>
            <person name="Imamovic A."/>
            <person name="Ireland A."/>
            <person name="Larimer J."/>
            <person name="McCowan C."/>
            <person name="Murphy C."/>
            <person name="Pearson M."/>
            <person name="Poon T.W."/>
            <person name="Priest M."/>
            <person name="Roberts A."/>
            <person name="Saif S."/>
            <person name="Shea T."/>
            <person name="Sykes S."/>
            <person name="Wortman J."/>
            <person name="Nusbaum C."/>
            <person name="Birren B."/>
        </authorList>
    </citation>
    <scope>NUCLEOTIDE SEQUENCE [LARGE SCALE GENOMIC DNA]</scope>
    <source>
        <strain>BWHPSA011 / Pa011</strain>
    </source>
</reference>
<reference key="2">
    <citation type="journal article" date="2019" name="Nature">
        <title>Bacterial cGAS-like enzymes synthesize diverse nucleotide signals.</title>
        <authorList>
            <person name="Whiteley A.T."/>
            <person name="Eaglesham J.B."/>
            <person name="de Oliveira Mann C.C."/>
            <person name="Morehouse B.R."/>
            <person name="Lowey B."/>
            <person name="Nieminen E.A."/>
            <person name="Danilchanka O."/>
            <person name="King D.S."/>
            <person name="Lee A.S.Y."/>
            <person name="Mekalanos J.J."/>
            <person name="Kranzusch P.J."/>
        </authorList>
    </citation>
    <scope>NOMENCLATURE</scope>
    <scope>SIMILARITY</scope>
</reference>
<reference key="3">
    <citation type="journal article" date="2023" name="Cell">
        <title>Bacteriophages inhibit and evade cGAS-like immune function in bacteria.</title>
        <authorList>
            <person name="Huiting E."/>
            <person name="Cao X."/>
            <person name="Ren J."/>
            <person name="Athukoralage J.S."/>
            <person name="Luo Z."/>
            <person name="Silas S."/>
            <person name="An N."/>
            <person name="Carion H."/>
            <person name="Zhou Y."/>
            <person name="Fraser J.S."/>
            <person name="Feng Y."/>
            <person name="Bondy-Denomy J."/>
        </authorList>
    </citation>
    <scope>ANTIVIRAL DEFENSE</scope>
    <scope>DISRUPTION PHENOTYPE</scope>
    <scope>MUTAGENESIS OF 450-CYS--CYS-453</scope>
    <source>
        <strain>BWHPSA011 / Pa011</strain>
    </source>
</reference>
<reference key="4">
    <citation type="journal article" date="2023" name="Nature">
        <title>Ubiquitin-like conjugation by bacterial cGAS enhances anti-phage defence.</title>
        <authorList>
            <person name="Jenson J.M."/>
            <person name="Li T."/>
            <person name="Du F."/>
            <person name="Ea C.K."/>
            <person name="Chen Z.J."/>
        </authorList>
    </citation>
    <scope>FUNCTION</scope>
    <scope>INTERACTION WITH CDNA</scope>
    <scope>DOMAIN</scope>
    <scope>MUTAGENESIS OF CYS-84 AND 450-CYS--CYS-453</scope>
    <source>
        <strain>BWHPSA011 / Pa011</strain>
    </source>
</reference>
<accession>P0DX87</accession>
<dbReference type="EC" id="2.3.2.-" evidence="4"/>
<dbReference type="EMBL" id="AXQR01000012">
    <property type="protein sequence ID" value="ERW74311.1"/>
    <property type="molecule type" value="Genomic_DNA"/>
</dbReference>
<dbReference type="RefSeq" id="WP_023121144.1">
    <property type="nucleotide sequence ID" value="NZ_KI519087.1"/>
</dbReference>
<dbReference type="SMR" id="P0DX87"/>
<dbReference type="GO" id="GO:0016740">
    <property type="term" value="F:transferase activity"/>
    <property type="evidence" value="ECO:0007669"/>
    <property type="project" value="UniProtKB-KW"/>
</dbReference>
<dbReference type="GO" id="GO:0061503">
    <property type="term" value="F:tRNA threonylcarbamoyladenosine dehydratase"/>
    <property type="evidence" value="ECO:0007669"/>
    <property type="project" value="TreeGrafter"/>
</dbReference>
<dbReference type="GO" id="GO:0008641">
    <property type="term" value="F:ubiquitin-like modifier activating enzyme activity"/>
    <property type="evidence" value="ECO:0007669"/>
    <property type="project" value="InterPro"/>
</dbReference>
<dbReference type="GO" id="GO:0061504">
    <property type="term" value="P:cyclic threonylcarbamoyladenosine biosynthetic process"/>
    <property type="evidence" value="ECO:0007669"/>
    <property type="project" value="TreeGrafter"/>
</dbReference>
<dbReference type="GO" id="GO:0051607">
    <property type="term" value="P:defense response to virus"/>
    <property type="evidence" value="ECO:0007669"/>
    <property type="project" value="UniProtKB-KW"/>
</dbReference>
<dbReference type="CDD" id="cd01483">
    <property type="entry name" value="E1_enzyme_family"/>
    <property type="match status" value="1"/>
</dbReference>
<dbReference type="Gene3D" id="3.40.50.720">
    <property type="entry name" value="NAD(P)-binding Rossmann-like Domain"/>
    <property type="match status" value="1"/>
</dbReference>
<dbReference type="InterPro" id="IPR032701">
    <property type="entry name" value="Prok-E2_B_dom"/>
</dbReference>
<dbReference type="InterPro" id="IPR045886">
    <property type="entry name" value="ThiF/MoeB/HesA"/>
</dbReference>
<dbReference type="InterPro" id="IPR000594">
    <property type="entry name" value="ThiF_NAD_FAD-bd"/>
</dbReference>
<dbReference type="InterPro" id="IPR035985">
    <property type="entry name" value="Ubiquitin-activating_enz"/>
</dbReference>
<dbReference type="PANTHER" id="PTHR43267">
    <property type="entry name" value="TRNA THREONYLCARBAMOYLADENOSINE DEHYDRATASE"/>
    <property type="match status" value="1"/>
</dbReference>
<dbReference type="PANTHER" id="PTHR43267:SF1">
    <property type="entry name" value="TRNA THREONYLCARBAMOYLADENOSINE DEHYDRATASE"/>
    <property type="match status" value="1"/>
</dbReference>
<dbReference type="Pfam" id="PF14461">
    <property type="entry name" value="Prok-E2_B"/>
    <property type="match status" value="1"/>
</dbReference>
<dbReference type="Pfam" id="PF00899">
    <property type="entry name" value="ThiF"/>
    <property type="match status" value="1"/>
</dbReference>
<dbReference type="SUPFAM" id="SSF69572">
    <property type="entry name" value="Activating enzymes of the ubiquitin-like proteins"/>
    <property type="match status" value="1"/>
</dbReference>
<comment type="function">
    <text evidence="2 3 5">CD-NTase priming component of a CBASS antiviral system (By similarity). CBASS (cyclic oligonucleotide-based antiphage signaling system) provides immunity against bacteriophages. The CD-NTase protein (CdnA) synthesizes cyclic nucleotides in response to infection; these serve as specific second messenger signals (PubMed:36750095). The signals activate a diverse range of effectors, leading to bacterial cell death and thus abortive phage infection (PubMed:36750095). A type II-A(GA) CBASS system (PubMed:30787435, PubMed:36750095).</text>
</comment>
<comment type="function">
    <text evidence="1 2 4">Acts as a protein transferase, conjugating CdnA, the CD-NTase, to unidentified target(s) in the cell probably via an E1-E2 ubiquitin transferase-like mechanism (PubMed:36848932). This primes CdnA, upon phage infection CdnA activates and makes cyclic nucleotides (By similarity). Protein conjugation requires ATP (By similarity).</text>
</comment>
<comment type="function">
    <text evidence="3">The capV-cdnA-cap2-cap3 operon provides about 10(4)-fold protection in strain BWHPSA011 against infection by phage PaMx41 (PubMed:36750095). In P.aeruginosa strain PAO1 it confers protection against phages PaMx41 and JBD18 but not JBD67 (JBD18 and JBD67 do not replicate in BWHPSA011 / Pa011) (PubMed:36750095). When acb2 in JBD67 is deleted this CBASS operon then protects against JDB67 also (PubMed:36750095). This CBASS system limits prophage induction of lysogenized JBD67 as well as viral lytic replication (PubMed:36750095).</text>
</comment>
<comment type="subunit">
    <text evidence="2 3">Forms a Cap2-CdnA complex (PubMed:36750095). A Cap2 dimer is bound on either side by a CdnA monomer (By similarity).</text>
</comment>
<comment type="induction">
    <text evidence="9">Part of a CBASS operon consisting of capV-cdnA-cap2-cap3.</text>
</comment>
<comment type="domain">
    <text evidence="2">Has an N-terminal E2-like domain, a linker and a C-terminal adenylation plus E1-like domain, dimerizes via the E1-like domain.</text>
</comment>
<comment type="disruption phenotype">
    <text evidence="3">Deletion of the capV-cdnA-cap2-cap3 operon (plus neighboring gene Q024_03603) results in about 10(4) higher titer of phage PaMx41 in this strain.</text>
</comment>
<comment type="similarity">
    <text evidence="8">In the C-terminal section; belongs to the HesA/MoeB/ThiF family.</text>
</comment>
<organism>
    <name type="scientific">Pseudomonas aeruginosa (strain BWHPSA011 / Pa011)</name>
    <dbReference type="NCBI Taxonomy" id="1402511"/>
    <lineage>
        <taxon>Bacteria</taxon>
        <taxon>Pseudomonadati</taxon>
        <taxon>Pseudomonadota</taxon>
        <taxon>Gammaproteobacteria</taxon>
        <taxon>Pseudomonadales</taxon>
        <taxon>Pseudomonadaceae</taxon>
        <taxon>Pseudomonas</taxon>
    </lineage>
</organism>
<gene>
    <name evidence="6" type="primary">cap2</name>
    <name evidence="11" type="ORF">Q024_03600</name>
</gene>
<name>CAP2_PSEU5</name>
<protein>
    <recommendedName>
        <fullName evidence="7">ATP-dependent ubiquitin transferase-like protein Cap2</fullName>
        <ecNumber evidence="4">2.3.2.-</ecNumber>
    </recommendedName>
    <alternativeName>
        <fullName evidence="7">CD-NTase-associated protein 2</fullName>
        <shortName evidence="7">Cap2</shortName>
    </alternativeName>
</protein>
<sequence length="543" mass="59869">MSSAAAVADVIEAFKQRGFEFVGKTDDGWFRLHGRLTPPQADKGCPCEVQLDPTFFNLPRIRLLEIPPELPAAVPHLGADGGLCYLAKGTVVLDIYDPVGQSLACLQRAAVVFGQIMQGEMIEDLAEEFFAYWHGWHCFVDMQGEDLGRQNCIVAHANGCPLWFITDNEDRTTEKLKSLGYQVTDRTVLTYRVKTGAQPRPLTSNWPPETVGDILAWQSTLDPRCRRKIHERIKEGERKKANGVLIVIESPLMTYGFAVLYDRQSLVQKSKLIDRRDSSYGLKVMPISVVRIDDRYLAQRNMPNSKTLAGKNIAVVGCGTIGGYLSDMLVKAGAGTCGGKLTLVDFDCLLPQNIGRHRLGFPDLLSNKAEAMAKELKRLAPGAEIRALPVDVRHAQLGELDLLIDATGEESLGHWLCGHYPPPTPMLSVWIEGPGTAVRALLRTKASDACYRCLWHSNRRGEFRSITDPLPAILAGHGCEGLYVPFPASVSVHAASLGAEMTLDWVNGVYTPALRTRLIDRAQQLATPDCDPPRDRECPLCNS</sequence>
<keyword id="KW-0051">Antiviral defense</keyword>
<keyword id="KW-1017">Isopeptide bond</keyword>
<keyword id="KW-0808">Transferase</keyword>